<name>FLUC_THIDA</name>
<feature type="chain" id="PRO_0000252957" description="Fluoride-specific ion channel FluC">
    <location>
        <begin position="1"/>
        <end position="124"/>
    </location>
</feature>
<feature type="transmembrane region" description="Helical" evidence="1">
    <location>
        <begin position="4"/>
        <end position="24"/>
    </location>
</feature>
<feature type="transmembrane region" description="Helical" evidence="1">
    <location>
        <begin position="34"/>
        <end position="54"/>
    </location>
</feature>
<feature type="transmembrane region" description="Helical" evidence="1">
    <location>
        <begin position="67"/>
        <end position="87"/>
    </location>
</feature>
<feature type="transmembrane region" description="Helical" evidence="1">
    <location>
        <begin position="100"/>
        <end position="120"/>
    </location>
</feature>
<feature type="binding site" evidence="1">
    <location>
        <position position="74"/>
    </location>
    <ligand>
        <name>Na(+)</name>
        <dbReference type="ChEBI" id="CHEBI:29101"/>
        <note>structural</note>
    </ligand>
</feature>
<feature type="binding site" evidence="1">
    <location>
        <position position="77"/>
    </location>
    <ligand>
        <name>Na(+)</name>
        <dbReference type="ChEBI" id="CHEBI:29101"/>
        <note>structural</note>
    </ligand>
</feature>
<comment type="function">
    <text evidence="1">Fluoride-specific ion channel. Important for reducing fluoride concentration in the cell, thus reducing its toxicity.</text>
</comment>
<comment type="catalytic activity">
    <reaction evidence="1">
        <text>fluoride(in) = fluoride(out)</text>
        <dbReference type="Rhea" id="RHEA:76159"/>
        <dbReference type="ChEBI" id="CHEBI:17051"/>
    </reaction>
    <physiologicalReaction direction="left-to-right" evidence="1">
        <dbReference type="Rhea" id="RHEA:76160"/>
    </physiologicalReaction>
</comment>
<comment type="activity regulation">
    <text evidence="1">Na(+) is not transported, but it plays an essential structural role and its presence is essential for fluoride channel function.</text>
</comment>
<comment type="subcellular location">
    <subcellularLocation>
        <location evidence="1">Cell inner membrane</location>
        <topology evidence="1">Multi-pass membrane protein</topology>
    </subcellularLocation>
</comment>
<comment type="similarity">
    <text evidence="1">Belongs to the fluoride channel Fluc/FEX (TC 1.A.43) family.</text>
</comment>
<proteinExistence type="inferred from homology"/>
<organism>
    <name type="scientific">Thiobacillus denitrificans (strain ATCC 25259 / T1)</name>
    <dbReference type="NCBI Taxonomy" id="292415"/>
    <lineage>
        <taxon>Bacteria</taxon>
        <taxon>Pseudomonadati</taxon>
        <taxon>Pseudomonadota</taxon>
        <taxon>Betaproteobacteria</taxon>
        <taxon>Nitrosomonadales</taxon>
        <taxon>Thiobacillaceae</taxon>
        <taxon>Thiobacillus</taxon>
    </lineage>
</organism>
<gene>
    <name evidence="1" type="primary">fluC</name>
    <name evidence="1" type="synonym">crcB</name>
    <name type="ordered locus">Tbd_1036</name>
</gene>
<keyword id="KW-0997">Cell inner membrane</keyword>
<keyword id="KW-1003">Cell membrane</keyword>
<keyword id="KW-0407">Ion channel</keyword>
<keyword id="KW-0406">Ion transport</keyword>
<keyword id="KW-0472">Membrane</keyword>
<keyword id="KW-0479">Metal-binding</keyword>
<keyword id="KW-1185">Reference proteome</keyword>
<keyword id="KW-0915">Sodium</keyword>
<keyword id="KW-0812">Transmembrane</keyword>
<keyword id="KW-1133">Transmembrane helix</keyword>
<keyword id="KW-0813">Transport</keyword>
<protein>
    <recommendedName>
        <fullName evidence="1">Fluoride-specific ion channel FluC</fullName>
    </recommendedName>
</protein>
<sequence>MTAFLAVGFGAAVGAWLRWGLGLWLNPAYPAMPLGTLAANVIGGYFIGLVLAWFAEHPGVPPEARLFVITGLLGGLTTFSTFSAEVVTALTRGLWLTGSLIAFAHLAGSFIATGLGFYSLKFLK</sequence>
<evidence type="ECO:0000255" key="1">
    <source>
        <dbReference type="HAMAP-Rule" id="MF_00454"/>
    </source>
</evidence>
<reference key="1">
    <citation type="journal article" date="2006" name="J. Bacteriol.">
        <title>The genome sequence of the obligately chemolithoautotrophic, facultatively anaerobic bacterium Thiobacillus denitrificans.</title>
        <authorList>
            <person name="Beller H.R."/>
            <person name="Chain P.S."/>
            <person name="Letain T.E."/>
            <person name="Chakicherla A."/>
            <person name="Larimer F.W."/>
            <person name="Richardson P.M."/>
            <person name="Coleman M.A."/>
            <person name="Wood A.P."/>
            <person name="Kelly D.P."/>
        </authorList>
    </citation>
    <scope>NUCLEOTIDE SEQUENCE [LARGE SCALE GENOMIC DNA]</scope>
    <source>
        <strain>ATCC 25259 / T1</strain>
    </source>
</reference>
<accession>Q3SK07</accession>
<dbReference type="EMBL" id="CP000116">
    <property type="protein sequence ID" value="AAZ96989.1"/>
    <property type="molecule type" value="Genomic_DNA"/>
</dbReference>
<dbReference type="RefSeq" id="WP_011311548.1">
    <property type="nucleotide sequence ID" value="NC_007404.1"/>
</dbReference>
<dbReference type="SMR" id="Q3SK07"/>
<dbReference type="STRING" id="292415.Tbd_1036"/>
<dbReference type="KEGG" id="tbd:Tbd_1036"/>
<dbReference type="eggNOG" id="COG0239">
    <property type="taxonomic scope" value="Bacteria"/>
</dbReference>
<dbReference type="HOGENOM" id="CLU_114342_3_3_4"/>
<dbReference type="OrthoDB" id="9806299at2"/>
<dbReference type="Proteomes" id="UP000008291">
    <property type="component" value="Chromosome"/>
</dbReference>
<dbReference type="GO" id="GO:0005886">
    <property type="term" value="C:plasma membrane"/>
    <property type="evidence" value="ECO:0007669"/>
    <property type="project" value="UniProtKB-SubCell"/>
</dbReference>
<dbReference type="GO" id="GO:0062054">
    <property type="term" value="F:fluoride channel activity"/>
    <property type="evidence" value="ECO:0007669"/>
    <property type="project" value="UniProtKB-UniRule"/>
</dbReference>
<dbReference type="GO" id="GO:0046872">
    <property type="term" value="F:metal ion binding"/>
    <property type="evidence" value="ECO:0007669"/>
    <property type="project" value="UniProtKB-KW"/>
</dbReference>
<dbReference type="GO" id="GO:0140114">
    <property type="term" value="P:cellular detoxification of fluoride"/>
    <property type="evidence" value="ECO:0007669"/>
    <property type="project" value="UniProtKB-UniRule"/>
</dbReference>
<dbReference type="HAMAP" id="MF_00454">
    <property type="entry name" value="FluC"/>
    <property type="match status" value="1"/>
</dbReference>
<dbReference type="InterPro" id="IPR003691">
    <property type="entry name" value="FluC"/>
</dbReference>
<dbReference type="NCBIfam" id="TIGR00494">
    <property type="entry name" value="crcB"/>
    <property type="match status" value="1"/>
</dbReference>
<dbReference type="NCBIfam" id="NF010792">
    <property type="entry name" value="PRK14196.1"/>
    <property type="match status" value="1"/>
</dbReference>
<dbReference type="PANTHER" id="PTHR28259">
    <property type="entry name" value="FLUORIDE EXPORT PROTEIN 1-RELATED"/>
    <property type="match status" value="1"/>
</dbReference>
<dbReference type="PANTHER" id="PTHR28259:SF1">
    <property type="entry name" value="FLUORIDE EXPORT PROTEIN 1-RELATED"/>
    <property type="match status" value="1"/>
</dbReference>
<dbReference type="Pfam" id="PF02537">
    <property type="entry name" value="CRCB"/>
    <property type="match status" value="1"/>
</dbReference>